<keyword id="KW-0963">Cytoplasm</keyword>
<keyword id="KW-0235">DNA replication</keyword>
<keyword id="KW-0236">DNA replication inhibitor</keyword>
<keyword id="KW-0479">Metal-binding</keyword>
<keyword id="KW-0862">Zinc</keyword>
<dbReference type="EMBL" id="CP000903">
    <property type="protein sequence ID" value="ABY41297.1"/>
    <property type="molecule type" value="Genomic_DNA"/>
</dbReference>
<dbReference type="RefSeq" id="WP_002009639.1">
    <property type="nucleotide sequence ID" value="NZ_CAKMRX030000131.1"/>
</dbReference>
<dbReference type="SMR" id="A9VN46"/>
<dbReference type="GeneID" id="66264915"/>
<dbReference type="KEGG" id="bwe:BcerKBAB4_0028"/>
<dbReference type="eggNOG" id="COG4467">
    <property type="taxonomic scope" value="Bacteria"/>
</dbReference>
<dbReference type="HOGENOM" id="CLU_157169_0_0_9"/>
<dbReference type="Proteomes" id="UP000002154">
    <property type="component" value="Chromosome"/>
</dbReference>
<dbReference type="GO" id="GO:0009295">
    <property type="term" value="C:nucleoid"/>
    <property type="evidence" value="ECO:0007669"/>
    <property type="project" value="UniProtKB-SubCell"/>
</dbReference>
<dbReference type="GO" id="GO:0006260">
    <property type="term" value="P:DNA replication"/>
    <property type="evidence" value="ECO:0007669"/>
    <property type="project" value="UniProtKB-UniRule"/>
</dbReference>
<dbReference type="Gene3D" id="1.20.5.1160">
    <property type="entry name" value="Vasodilator-stimulated phosphoprotein"/>
    <property type="match status" value="1"/>
</dbReference>
<dbReference type="HAMAP" id="MF_01159">
    <property type="entry name" value="YabA"/>
    <property type="match status" value="1"/>
</dbReference>
<dbReference type="InterPro" id="IPR010377">
    <property type="entry name" value="YabA"/>
</dbReference>
<dbReference type="NCBIfam" id="NF009644">
    <property type="entry name" value="PRK13169.1-5"/>
    <property type="match status" value="1"/>
</dbReference>
<dbReference type="Pfam" id="PF06156">
    <property type="entry name" value="YabA"/>
    <property type="match status" value="1"/>
</dbReference>
<dbReference type="PIRSF" id="PIRSF021439">
    <property type="entry name" value="DUF972"/>
    <property type="match status" value="1"/>
</dbReference>
<feature type="chain" id="PRO_1000137833" description="Replication initiation control protein YabA">
    <location>
        <begin position="1"/>
        <end position="116"/>
    </location>
</feature>
<feature type="binding site" evidence="1">
    <location>
        <position position="91"/>
    </location>
    <ligand>
        <name>Zn(2+)</name>
        <dbReference type="ChEBI" id="CHEBI:29105"/>
    </ligand>
</feature>
<feature type="binding site" evidence="1">
    <location>
        <position position="93"/>
    </location>
    <ligand>
        <name>Zn(2+)</name>
        <dbReference type="ChEBI" id="CHEBI:29105"/>
    </ligand>
</feature>
<feature type="binding site" evidence="1">
    <location>
        <position position="106"/>
    </location>
    <ligand>
        <name>Zn(2+)</name>
        <dbReference type="ChEBI" id="CHEBI:29105"/>
    </ligand>
</feature>
<feature type="binding site" evidence="1">
    <location>
        <position position="109"/>
    </location>
    <ligand>
        <name>Zn(2+)</name>
        <dbReference type="ChEBI" id="CHEBI:29105"/>
    </ligand>
</feature>
<evidence type="ECO:0000255" key="1">
    <source>
        <dbReference type="HAMAP-Rule" id="MF_01159"/>
    </source>
</evidence>
<reference key="1">
    <citation type="journal article" date="2008" name="Chem. Biol. Interact.">
        <title>Extending the Bacillus cereus group genomics to putative food-borne pathogens of different toxicity.</title>
        <authorList>
            <person name="Lapidus A."/>
            <person name="Goltsman E."/>
            <person name="Auger S."/>
            <person name="Galleron N."/>
            <person name="Segurens B."/>
            <person name="Dossat C."/>
            <person name="Land M.L."/>
            <person name="Broussolle V."/>
            <person name="Brillard J."/>
            <person name="Guinebretiere M.-H."/>
            <person name="Sanchis V."/>
            <person name="Nguen-the C."/>
            <person name="Lereclus D."/>
            <person name="Richardson P."/>
            <person name="Wincker P."/>
            <person name="Weissenbach J."/>
            <person name="Ehrlich S.D."/>
            <person name="Sorokin A."/>
        </authorList>
    </citation>
    <scope>NUCLEOTIDE SEQUENCE [LARGE SCALE GENOMIC DNA]</scope>
    <source>
        <strain>KBAB4</strain>
    </source>
</reference>
<sequence>MEKKDIFASVSSMEEQIGHLYKQLGELKQHLAELLEENQHIKMENENLRHRFEEVQNKEKQKTQKRKEMKAKTDIGEGYDNLARLYQEGFHICNLHYGSVRKEGDCLFCLSFLNKK</sequence>
<proteinExistence type="inferred from homology"/>
<name>YABA_BACMK</name>
<comment type="function">
    <text evidence="1">Involved in control of chromosome replication initiation. Inhibits the cooperative binding of DnaA to the oriC region, thus negatively regulating initiation of chromosome replication. Inhibits the ability of DnaA-ATP to form a helix on DNA; does not disassemble preformed DnaA-DNA helices. Decreases the residence time of DnaA on the chromosome at its binding sites (oriC, replication forks and promoter-binding sites). Tethers DnaA to the replication machinery via the DNA polymerase beta sliding clamp subunit (dnaN). Associates with oriC and other DnaA targets on the chromosome in a DnaA-dependent manner.</text>
</comment>
<comment type="cofactor">
    <cofactor evidence="1">
        <name>Zn(2+)</name>
        <dbReference type="ChEBI" id="CHEBI:29105"/>
    </cofactor>
    <text evidence="1">Binds 1 zinc ion per subunit.</text>
</comment>
<comment type="subunit">
    <text evidence="1">Homotetramer. Interacts with both DnaA and DnaN, acting as a bridge between these two proteins.</text>
</comment>
<comment type="subcellular location">
    <subcellularLocation>
        <location evidence="1">Cytoplasm</location>
        <location evidence="1">Nucleoid</location>
    </subcellularLocation>
    <text evidence="1">Localizes in tight foci, which correspond to the replisome at mid-cell throughout the cell cycle.</text>
</comment>
<comment type="similarity">
    <text evidence="1">Belongs to the YabA family.</text>
</comment>
<gene>
    <name evidence="1" type="primary">yabA</name>
    <name type="ordered locus">BcerKBAB4_0028</name>
</gene>
<protein>
    <recommendedName>
        <fullName evidence="1">Replication initiation control protein YabA</fullName>
    </recommendedName>
</protein>
<organism>
    <name type="scientific">Bacillus mycoides (strain KBAB4)</name>
    <name type="common">Bacillus weihenstephanensis</name>
    <dbReference type="NCBI Taxonomy" id="315730"/>
    <lineage>
        <taxon>Bacteria</taxon>
        <taxon>Bacillati</taxon>
        <taxon>Bacillota</taxon>
        <taxon>Bacilli</taxon>
        <taxon>Bacillales</taxon>
        <taxon>Bacillaceae</taxon>
        <taxon>Bacillus</taxon>
        <taxon>Bacillus cereus group</taxon>
    </lineage>
</organism>
<accession>A9VN46</accession>